<comment type="function">
    <text evidence="4">Has antibacterial activity.</text>
</comment>
<comment type="subcellular location">
    <subcellularLocation>
        <location evidence="4">Secreted</location>
    </subcellularLocation>
</comment>
<comment type="similarity">
    <text evidence="4">Belongs to the beta-defensin family.</text>
</comment>
<keyword id="KW-0044">Antibiotic</keyword>
<keyword id="KW-0929">Antimicrobial</keyword>
<keyword id="KW-0211">Defensin</keyword>
<keyword id="KW-1015">Disulfide bond</keyword>
<keyword id="KW-1185">Reference proteome</keyword>
<keyword id="KW-0964">Secreted</keyword>
<keyword id="KW-0732">Signal</keyword>
<evidence type="ECO:0000250" key="1"/>
<evidence type="ECO:0000255" key="2"/>
<evidence type="ECO:0000256" key="3">
    <source>
        <dbReference type="SAM" id="MobiDB-lite"/>
    </source>
</evidence>
<evidence type="ECO:0000305" key="4"/>
<name>DB132_MACFA</name>
<accession>A4H265</accession>
<sequence length="95" mass="10569">MKFLLLVLAALGFLTQVIPASGGGSKCVSDTPGYCRTHCHRGETALFMCSPFRKCCISYSFLPQPDLPQLIGNHWPSRSRNTQRKNKKQQTTVTP</sequence>
<protein>
    <recommendedName>
        <fullName>Beta-defensin 132</fullName>
    </recommendedName>
    <alternativeName>
        <fullName>Defensin, beta 132</fullName>
    </alternativeName>
</protein>
<gene>
    <name type="primary">DEFB132</name>
</gene>
<organism>
    <name type="scientific">Macaca fascicularis</name>
    <name type="common">Crab-eating macaque</name>
    <name type="synonym">Cynomolgus monkey</name>
    <dbReference type="NCBI Taxonomy" id="9541"/>
    <lineage>
        <taxon>Eukaryota</taxon>
        <taxon>Metazoa</taxon>
        <taxon>Chordata</taxon>
        <taxon>Craniata</taxon>
        <taxon>Vertebrata</taxon>
        <taxon>Euteleostomi</taxon>
        <taxon>Mammalia</taxon>
        <taxon>Eutheria</taxon>
        <taxon>Euarchontoglires</taxon>
        <taxon>Primates</taxon>
        <taxon>Haplorrhini</taxon>
        <taxon>Catarrhini</taxon>
        <taxon>Cercopithecidae</taxon>
        <taxon>Cercopithecinae</taxon>
        <taxon>Macaca</taxon>
    </lineage>
</organism>
<feature type="signal peptide" evidence="2">
    <location>
        <begin position="1"/>
        <end position="22"/>
    </location>
</feature>
<feature type="chain" id="PRO_0000289860" description="Beta-defensin 132">
    <location>
        <begin position="23"/>
        <end position="95"/>
    </location>
</feature>
<feature type="region of interest" description="Disordered" evidence="3">
    <location>
        <begin position="72"/>
        <end position="95"/>
    </location>
</feature>
<feature type="disulfide bond" evidence="1">
    <location>
        <begin position="27"/>
        <end position="55"/>
    </location>
</feature>
<feature type="disulfide bond" evidence="1">
    <location>
        <begin position="35"/>
        <end position="49"/>
    </location>
</feature>
<feature type="disulfide bond" evidence="1">
    <location>
        <begin position="39"/>
        <end position="56"/>
    </location>
</feature>
<proteinExistence type="inferred from homology"/>
<reference key="1">
    <citation type="submission" date="2006-11" db="EMBL/GenBank/DDBJ databases">
        <title>Evolution and sequence variation of human beta-defensin genes.</title>
        <authorList>
            <person name="Hollox E.J."/>
            <person name="Armour J.A.L."/>
        </authorList>
    </citation>
    <scope>NUCLEOTIDE SEQUENCE [GENOMIC DNA]</scope>
</reference>
<dbReference type="EMBL" id="AM410170">
    <property type="protein sequence ID" value="CAL68986.1"/>
    <property type="molecule type" value="Genomic_DNA"/>
</dbReference>
<dbReference type="RefSeq" id="XP_005568663.1">
    <property type="nucleotide sequence ID" value="XM_005568606.4"/>
</dbReference>
<dbReference type="STRING" id="9541.ENSMFAP00000035246"/>
<dbReference type="Ensembl" id="ENSMFAT00000074602.1">
    <property type="protein sequence ID" value="ENSMFAP00000052372.1"/>
    <property type="gene ID" value="ENSMFAG00000064390.1"/>
</dbReference>
<dbReference type="GeneID" id="102131746"/>
<dbReference type="KEGG" id="mcf:102131746"/>
<dbReference type="CTD" id="400830"/>
<dbReference type="VEuPathDB" id="HostDB:ENSMFAG00000033994"/>
<dbReference type="eggNOG" id="ENOG502TE15">
    <property type="taxonomic scope" value="Eukaryota"/>
</dbReference>
<dbReference type="GeneTree" id="ENSGT00940000165094"/>
<dbReference type="OMA" id="NASRKCC"/>
<dbReference type="OrthoDB" id="13733at314294"/>
<dbReference type="Proteomes" id="UP000233100">
    <property type="component" value="Chromosome 10"/>
</dbReference>
<dbReference type="GO" id="GO:0005615">
    <property type="term" value="C:extracellular space"/>
    <property type="evidence" value="ECO:0007669"/>
    <property type="project" value="Ensembl"/>
</dbReference>
<dbReference type="GO" id="GO:0061827">
    <property type="term" value="C:sperm head"/>
    <property type="evidence" value="ECO:0007669"/>
    <property type="project" value="Ensembl"/>
</dbReference>
<dbReference type="GO" id="GO:0042742">
    <property type="term" value="P:defense response to bacterium"/>
    <property type="evidence" value="ECO:0007669"/>
    <property type="project" value="UniProtKB-KW"/>
</dbReference>
<dbReference type="GO" id="GO:0045087">
    <property type="term" value="P:innate immune response"/>
    <property type="evidence" value="ECO:0007669"/>
    <property type="project" value="InterPro"/>
</dbReference>
<dbReference type="GO" id="GO:0031640">
    <property type="term" value="P:killing of cells of another organism"/>
    <property type="evidence" value="ECO:0007669"/>
    <property type="project" value="Ensembl"/>
</dbReference>
<dbReference type="InterPro" id="IPR050544">
    <property type="entry name" value="Beta-defensin"/>
</dbReference>
<dbReference type="InterPro" id="IPR025933">
    <property type="entry name" value="Beta_defensin_dom"/>
</dbReference>
<dbReference type="PANTHER" id="PTHR15001">
    <property type="entry name" value="BETA-DEFENSIN 123-RELATED"/>
    <property type="match status" value="1"/>
</dbReference>
<dbReference type="PANTHER" id="PTHR15001:SF7">
    <property type="entry name" value="DEFENSIN BETA 118"/>
    <property type="match status" value="1"/>
</dbReference>
<dbReference type="Pfam" id="PF13841">
    <property type="entry name" value="Defensin_beta_2"/>
    <property type="match status" value="1"/>
</dbReference>